<gene>
    <name evidence="1" type="primary">aat</name>
    <name type="ordered locus">c1022</name>
</gene>
<proteinExistence type="inferred from homology"/>
<comment type="function">
    <text evidence="1">Functions in the N-end rule pathway of protein degradation where it conjugates Leu, Phe and, less efficiently, Met from aminoacyl-tRNAs to the N-termini of proteins containing an N-terminal arginine or lysine.</text>
</comment>
<comment type="catalytic activity">
    <reaction evidence="1">
        <text>N-terminal L-lysyl-[protein] + L-leucyl-tRNA(Leu) = N-terminal L-leucyl-L-lysyl-[protein] + tRNA(Leu) + H(+)</text>
        <dbReference type="Rhea" id="RHEA:12340"/>
        <dbReference type="Rhea" id="RHEA-COMP:9613"/>
        <dbReference type="Rhea" id="RHEA-COMP:9622"/>
        <dbReference type="Rhea" id="RHEA-COMP:12670"/>
        <dbReference type="Rhea" id="RHEA-COMP:12671"/>
        <dbReference type="ChEBI" id="CHEBI:15378"/>
        <dbReference type="ChEBI" id="CHEBI:65249"/>
        <dbReference type="ChEBI" id="CHEBI:78442"/>
        <dbReference type="ChEBI" id="CHEBI:78494"/>
        <dbReference type="ChEBI" id="CHEBI:133043"/>
        <dbReference type="EC" id="2.3.2.6"/>
    </reaction>
</comment>
<comment type="catalytic activity">
    <reaction evidence="1">
        <text>N-terminal L-arginyl-[protein] + L-leucyl-tRNA(Leu) = N-terminal L-leucyl-L-arginyl-[protein] + tRNA(Leu) + H(+)</text>
        <dbReference type="Rhea" id="RHEA:50416"/>
        <dbReference type="Rhea" id="RHEA-COMP:9613"/>
        <dbReference type="Rhea" id="RHEA-COMP:9622"/>
        <dbReference type="Rhea" id="RHEA-COMP:12672"/>
        <dbReference type="Rhea" id="RHEA-COMP:12673"/>
        <dbReference type="ChEBI" id="CHEBI:15378"/>
        <dbReference type="ChEBI" id="CHEBI:64719"/>
        <dbReference type="ChEBI" id="CHEBI:78442"/>
        <dbReference type="ChEBI" id="CHEBI:78494"/>
        <dbReference type="ChEBI" id="CHEBI:133044"/>
        <dbReference type="EC" id="2.3.2.6"/>
    </reaction>
</comment>
<comment type="catalytic activity">
    <reaction evidence="1">
        <text>L-phenylalanyl-tRNA(Phe) + an N-terminal L-alpha-aminoacyl-[protein] = an N-terminal L-phenylalanyl-L-alpha-aminoacyl-[protein] + tRNA(Phe)</text>
        <dbReference type="Rhea" id="RHEA:43632"/>
        <dbReference type="Rhea" id="RHEA-COMP:9668"/>
        <dbReference type="Rhea" id="RHEA-COMP:9699"/>
        <dbReference type="Rhea" id="RHEA-COMP:10636"/>
        <dbReference type="Rhea" id="RHEA-COMP:10637"/>
        <dbReference type="ChEBI" id="CHEBI:78442"/>
        <dbReference type="ChEBI" id="CHEBI:78531"/>
        <dbReference type="ChEBI" id="CHEBI:78597"/>
        <dbReference type="ChEBI" id="CHEBI:83561"/>
        <dbReference type="EC" id="2.3.2.6"/>
    </reaction>
</comment>
<comment type="subcellular location">
    <subcellularLocation>
        <location evidence="1">Cytoplasm</location>
    </subcellularLocation>
</comment>
<comment type="similarity">
    <text evidence="1">Belongs to the L/F-transferase family.</text>
</comment>
<feature type="chain" id="PRO_0000207219" description="Leucyl/phenylalanyl-tRNA--protein transferase">
    <location>
        <begin position="1"/>
        <end position="234"/>
    </location>
</feature>
<protein>
    <recommendedName>
        <fullName evidence="1">Leucyl/phenylalanyl-tRNA--protein transferase</fullName>
        <ecNumber evidence="1">2.3.2.6</ecNumber>
    </recommendedName>
    <alternativeName>
        <fullName evidence="1">L/F-transferase</fullName>
    </alternativeName>
    <alternativeName>
        <fullName evidence="1">Leucyltransferase</fullName>
    </alternativeName>
    <alternativeName>
        <fullName evidence="1">Phenyalanyltransferase</fullName>
    </alternativeName>
</protein>
<name>LFTR_ECOL6</name>
<evidence type="ECO:0000255" key="1">
    <source>
        <dbReference type="HAMAP-Rule" id="MF_00688"/>
    </source>
</evidence>
<accession>Q8FJD1</accession>
<dbReference type="EC" id="2.3.2.6" evidence="1"/>
<dbReference type="EMBL" id="AE014075">
    <property type="protein sequence ID" value="AAN79494.1"/>
    <property type="molecule type" value="Genomic_DNA"/>
</dbReference>
<dbReference type="RefSeq" id="WP_001241667.1">
    <property type="nucleotide sequence ID" value="NZ_CP051263.1"/>
</dbReference>
<dbReference type="SMR" id="Q8FJD1"/>
<dbReference type="STRING" id="199310.c1022"/>
<dbReference type="KEGG" id="ecc:c1022"/>
<dbReference type="eggNOG" id="COG2360">
    <property type="taxonomic scope" value="Bacteria"/>
</dbReference>
<dbReference type="HOGENOM" id="CLU_075045_0_0_6"/>
<dbReference type="BioCyc" id="ECOL199310:C1022-MONOMER"/>
<dbReference type="Proteomes" id="UP000001410">
    <property type="component" value="Chromosome"/>
</dbReference>
<dbReference type="GO" id="GO:0005737">
    <property type="term" value="C:cytoplasm"/>
    <property type="evidence" value="ECO:0007669"/>
    <property type="project" value="UniProtKB-SubCell"/>
</dbReference>
<dbReference type="GO" id="GO:0008914">
    <property type="term" value="F:leucyl-tRNA--protein transferase activity"/>
    <property type="evidence" value="ECO:0007669"/>
    <property type="project" value="UniProtKB-UniRule"/>
</dbReference>
<dbReference type="GO" id="GO:0030163">
    <property type="term" value="P:protein catabolic process"/>
    <property type="evidence" value="ECO:0007669"/>
    <property type="project" value="UniProtKB-UniRule"/>
</dbReference>
<dbReference type="FunFam" id="3.30.70.3550:FF:000001">
    <property type="entry name" value="Leucyl/phenylalanyl-tRNA--protein transferase"/>
    <property type="match status" value="1"/>
</dbReference>
<dbReference type="FunFam" id="3.40.630.70:FF:000001">
    <property type="entry name" value="Leucyl/phenylalanyl-tRNA--protein transferase"/>
    <property type="match status" value="1"/>
</dbReference>
<dbReference type="Gene3D" id="3.40.630.70">
    <property type="entry name" value="Leucyl/phenylalanyl-tRNA-protein transferase, C-terminal domain"/>
    <property type="match status" value="1"/>
</dbReference>
<dbReference type="Gene3D" id="3.30.70.3550">
    <property type="entry name" value="Leucyl/phenylalanyl-tRNA-protein transferase, N-terminal domain"/>
    <property type="match status" value="1"/>
</dbReference>
<dbReference type="HAMAP" id="MF_00688">
    <property type="entry name" value="Leu_Phe_trans"/>
    <property type="match status" value="1"/>
</dbReference>
<dbReference type="InterPro" id="IPR016181">
    <property type="entry name" value="Acyl_CoA_acyltransferase"/>
</dbReference>
<dbReference type="InterPro" id="IPR004616">
    <property type="entry name" value="Leu/Phe-tRNA_Trfase"/>
</dbReference>
<dbReference type="InterPro" id="IPR042203">
    <property type="entry name" value="Leu/Phe-tRNA_Trfase_C"/>
</dbReference>
<dbReference type="InterPro" id="IPR042221">
    <property type="entry name" value="Leu/Phe-tRNA_Trfase_N"/>
</dbReference>
<dbReference type="NCBIfam" id="TIGR00667">
    <property type="entry name" value="aat"/>
    <property type="match status" value="1"/>
</dbReference>
<dbReference type="PANTHER" id="PTHR30098">
    <property type="entry name" value="LEUCYL/PHENYLALANYL-TRNA--PROTEIN TRANSFERASE"/>
    <property type="match status" value="1"/>
</dbReference>
<dbReference type="PANTHER" id="PTHR30098:SF2">
    <property type="entry name" value="LEUCYL_PHENYLALANYL-TRNA--PROTEIN TRANSFERASE"/>
    <property type="match status" value="1"/>
</dbReference>
<dbReference type="Pfam" id="PF03588">
    <property type="entry name" value="Leu_Phe_trans"/>
    <property type="match status" value="1"/>
</dbReference>
<dbReference type="SUPFAM" id="SSF55729">
    <property type="entry name" value="Acyl-CoA N-acyltransferases (Nat)"/>
    <property type="match status" value="1"/>
</dbReference>
<reference key="1">
    <citation type="journal article" date="2002" name="Proc. Natl. Acad. Sci. U.S.A.">
        <title>Extensive mosaic structure revealed by the complete genome sequence of uropathogenic Escherichia coli.</title>
        <authorList>
            <person name="Welch R.A."/>
            <person name="Burland V."/>
            <person name="Plunkett G. III"/>
            <person name="Redford P."/>
            <person name="Roesch P."/>
            <person name="Rasko D."/>
            <person name="Buckles E.L."/>
            <person name="Liou S.-R."/>
            <person name="Boutin A."/>
            <person name="Hackett J."/>
            <person name="Stroud D."/>
            <person name="Mayhew G.F."/>
            <person name="Rose D.J."/>
            <person name="Zhou S."/>
            <person name="Schwartz D.C."/>
            <person name="Perna N.T."/>
            <person name="Mobley H.L.T."/>
            <person name="Donnenberg M.S."/>
            <person name="Blattner F.R."/>
        </authorList>
    </citation>
    <scope>NUCLEOTIDE SEQUENCE [LARGE SCALE GENOMIC DNA]</scope>
    <source>
        <strain>CFT073 / ATCC 700928 / UPEC</strain>
    </source>
</reference>
<sequence>MRLVQLSRHSIAFPSPEGALREPNGLLALGGDLSPARLLMAYQRGIFPWFSPGDPILWWSPDPRAVLWPESLHISRSMKRFHKRSPYRVTMNYAFGQVIEGCASDREEGTWITRGVVEAYHRLHELGHAHSIEVWCEDELVGGMYGVAQGTLFCGESMFSRMENASKTALLVFCEEFIGHGGKLIDCQVLNDHTASLGACEIPRRDYLNYLNQMRLGRLPNNFWVPRCLFSPQE</sequence>
<keyword id="KW-0012">Acyltransferase</keyword>
<keyword id="KW-0963">Cytoplasm</keyword>
<keyword id="KW-1185">Reference proteome</keyword>
<keyword id="KW-0808">Transferase</keyword>
<organism>
    <name type="scientific">Escherichia coli O6:H1 (strain CFT073 / ATCC 700928 / UPEC)</name>
    <dbReference type="NCBI Taxonomy" id="199310"/>
    <lineage>
        <taxon>Bacteria</taxon>
        <taxon>Pseudomonadati</taxon>
        <taxon>Pseudomonadota</taxon>
        <taxon>Gammaproteobacteria</taxon>
        <taxon>Enterobacterales</taxon>
        <taxon>Enterobacteriaceae</taxon>
        <taxon>Escherichia</taxon>
    </lineage>
</organism>